<dbReference type="EMBL" id="AJ965256">
    <property type="protein sequence ID" value="CAI82647.1"/>
    <property type="molecule type" value="Genomic_DNA"/>
</dbReference>
<dbReference type="RefSeq" id="WP_011309004.1">
    <property type="nucleotide sequence ID" value="NC_007356.1"/>
</dbReference>
<dbReference type="SMR" id="Q3ZZL6"/>
<dbReference type="KEGG" id="deh:cbdbA447"/>
<dbReference type="HOGENOM" id="CLU_158491_3_3_0"/>
<dbReference type="Proteomes" id="UP000000433">
    <property type="component" value="Chromosome"/>
</dbReference>
<dbReference type="GO" id="GO:0022625">
    <property type="term" value="C:cytosolic large ribosomal subunit"/>
    <property type="evidence" value="ECO:0007669"/>
    <property type="project" value="TreeGrafter"/>
</dbReference>
<dbReference type="GO" id="GO:0003735">
    <property type="term" value="F:structural constituent of ribosome"/>
    <property type="evidence" value="ECO:0007669"/>
    <property type="project" value="InterPro"/>
</dbReference>
<dbReference type="GO" id="GO:0006412">
    <property type="term" value="P:translation"/>
    <property type="evidence" value="ECO:0007669"/>
    <property type="project" value="UniProtKB-UniRule"/>
</dbReference>
<dbReference type="CDD" id="cd00427">
    <property type="entry name" value="Ribosomal_L29_HIP"/>
    <property type="match status" value="1"/>
</dbReference>
<dbReference type="FunFam" id="1.10.287.310:FF:000001">
    <property type="entry name" value="50S ribosomal protein L29"/>
    <property type="match status" value="1"/>
</dbReference>
<dbReference type="Gene3D" id="1.10.287.310">
    <property type="match status" value="1"/>
</dbReference>
<dbReference type="HAMAP" id="MF_00374">
    <property type="entry name" value="Ribosomal_uL29"/>
    <property type="match status" value="1"/>
</dbReference>
<dbReference type="InterPro" id="IPR050063">
    <property type="entry name" value="Ribosomal_protein_uL29"/>
</dbReference>
<dbReference type="InterPro" id="IPR001854">
    <property type="entry name" value="Ribosomal_uL29"/>
</dbReference>
<dbReference type="InterPro" id="IPR036049">
    <property type="entry name" value="Ribosomal_uL29_sf"/>
</dbReference>
<dbReference type="NCBIfam" id="TIGR00012">
    <property type="entry name" value="L29"/>
    <property type="match status" value="1"/>
</dbReference>
<dbReference type="PANTHER" id="PTHR10916">
    <property type="entry name" value="60S RIBOSOMAL PROTEIN L35/50S RIBOSOMAL PROTEIN L29"/>
    <property type="match status" value="1"/>
</dbReference>
<dbReference type="PANTHER" id="PTHR10916:SF0">
    <property type="entry name" value="LARGE RIBOSOMAL SUBUNIT PROTEIN UL29C"/>
    <property type="match status" value="1"/>
</dbReference>
<dbReference type="Pfam" id="PF00831">
    <property type="entry name" value="Ribosomal_L29"/>
    <property type="match status" value="1"/>
</dbReference>
<dbReference type="SUPFAM" id="SSF46561">
    <property type="entry name" value="Ribosomal protein L29 (L29p)"/>
    <property type="match status" value="1"/>
</dbReference>
<evidence type="ECO:0000255" key="1">
    <source>
        <dbReference type="HAMAP-Rule" id="MF_00374"/>
    </source>
</evidence>
<evidence type="ECO:0000305" key="2"/>
<keyword id="KW-0687">Ribonucleoprotein</keyword>
<keyword id="KW-0689">Ribosomal protein</keyword>
<sequence length="65" mass="7824">MNISDIRGLSDTEIKKKLEDSHKELFELRLKLSTRQLVNHRELPRVKNDIARILTVMRERELQIR</sequence>
<accession>Q3ZZL6</accession>
<reference key="1">
    <citation type="journal article" date="2005" name="Nat. Biotechnol.">
        <title>Genome sequence of the chlorinated compound-respiring bacterium Dehalococcoides species strain CBDB1.</title>
        <authorList>
            <person name="Kube M."/>
            <person name="Beck A."/>
            <person name="Zinder S.H."/>
            <person name="Kuhl H."/>
            <person name="Reinhardt R."/>
            <person name="Adrian L."/>
        </authorList>
    </citation>
    <scope>NUCLEOTIDE SEQUENCE [LARGE SCALE GENOMIC DNA]</scope>
    <source>
        <strain>CBDB1</strain>
    </source>
</reference>
<proteinExistence type="inferred from homology"/>
<gene>
    <name evidence="1" type="primary">rpmC</name>
    <name type="ordered locus">cbdbA447</name>
</gene>
<protein>
    <recommendedName>
        <fullName evidence="1">Large ribosomal subunit protein uL29</fullName>
    </recommendedName>
    <alternativeName>
        <fullName evidence="2">50S ribosomal protein L29</fullName>
    </alternativeName>
</protein>
<organism>
    <name type="scientific">Dehalococcoides mccartyi (strain CBDB1)</name>
    <dbReference type="NCBI Taxonomy" id="255470"/>
    <lineage>
        <taxon>Bacteria</taxon>
        <taxon>Bacillati</taxon>
        <taxon>Chloroflexota</taxon>
        <taxon>Dehalococcoidia</taxon>
        <taxon>Dehalococcoidales</taxon>
        <taxon>Dehalococcoidaceae</taxon>
        <taxon>Dehalococcoides</taxon>
    </lineage>
</organism>
<name>RL29_DEHMC</name>
<comment type="similarity">
    <text evidence="1">Belongs to the universal ribosomal protein uL29 family.</text>
</comment>
<feature type="chain" id="PRO_1000007469" description="Large ribosomal subunit protein uL29">
    <location>
        <begin position="1"/>
        <end position="65"/>
    </location>
</feature>